<dbReference type="EMBL" id="AE014134">
    <property type="protein sequence ID" value="AAF53452.1"/>
    <property type="molecule type" value="Genomic_DNA"/>
</dbReference>
<dbReference type="EMBL" id="AE014134">
    <property type="protein sequence ID" value="AGB93000.1"/>
    <property type="molecule type" value="Genomic_DNA"/>
</dbReference>
<dbReference type="EMBL" id="AY119558">
    <property type="protein sequence ID" value="AAM50212.1"/>
    <property type="molecule type" value="mRNA"/>
</dbReference>
<dbReference type="EMBL" id="KX532073">
    <property type="protein sequence ID" value="ANY27883.1"/>
    <property type="molecule type" value="mRNA"/>
</dbReference>
<dbReference type="RefSeq" id="NP_001260465.1">
    <property type="nucleotide sequence ID" value="NM_001273536.1"/>
</dbReference>
<dbReference type="RefSeq" id="NP_609747.1">
    <property type="nucleotide sequence ID" value="NM_135903.3"/>
</dbReference>
<dbReference type="SMR" id="Q9V3W0"/>
<dbReference type="FunCoup" id="Q9V3W0">
    <property type="interactions" value="899"/>
</dbReference>
<dbReference type="STRING" id="7227.FBpp0304650"/>
<dbReference type="PaxDb" id="7227-FBpp0304650"/>
<dbReference type="DNASU" id="34897"/>
<dbReference type="EnsemblMetazoa" id="FBtr0080746">
    <property type="protein sequence ID" value="FBpp0080305"/>
    <property type="gene ID" value="FBgn0086691"/>
</dbReference>
<dbReference type="EnsemblMetazoa" id="FBtr0332376">
    <property type="protein sequence ID" value="FBpp0304650"/>
    <property type="gene ID" value="FBgn0086691"/>
</dbReference>
<dbReference type="GeneID" id="34897"/>
<dbReference type="KEGG" id="dme:Dmel_CG15261"/>
<dbReference type="UCSC" id="CG15261-RA">
    <property type="organism name" value="d. melanogaster"/>
</dbReference>
<dbReference type="AGR" id="FB:FBgn0086691"/>
<dbReference type="CTD" id="34897"/>
<dbReference type="FlyBase" id="FBgn0086691">
    <property type="gene designation" value="UK114"/>
</dbReference>
<dbReference type="VEuPathDB" id="VectorBase:FBgn0086691"/>
<dbReference type="eggNOG" id="KOG2317">
    <property type="taxonomic scope" value="Eukaryota"/>
</dbReference>
<dbReference type="GeneTree" id="ENSGT00420000029792"/>
<dbReference type="HOGENOM" id="CLU_100715_7_1_1"/>
<dbReference type="InParanoid" id="Q9V3W0"/>
<dbReference type="OMA" id="GSYFKEP"/>
<dbReference type="OrthoDB" id="309640at2759"/>
<dbReference type="PhylomeDB" id="Q9V3W0"/>
<dbReference type="Reactome" id="R-DME-8849175">
    <property type="pathway name" value="Threonine catabolism"/>
</dbReference>
<dbReference type="BioGRID-ORCS" id="34897">
    <property type="hits" value="0 hits in 1 CRISPR screen"/>
</dbReference>
<dbReference type="GenomeRNAi" id="34897"/>
<dbReference type="PRO" id="PR:Q9V3W0"/>
<dbReference type="Proteomes" id="UP000000803">
    <property type="component" value="Chromosome 2L"/>
</dbReference>
<dbReference type="Bgee" id="FBgn0086691">
    <property type="expression patterns" value="Expressed in adult posterior midgut class I enteroendocrine cell in adult midgut (Drosophila) and 124 other cell types or tissues"/>
</dbReference>
<dbReference type="GO" id="GO:0005829">
    <property type="term" value="C:cytosol"/>
    <property type="evidence" value="ECO:0000318"/>
    <property type="project" value="GO_Central"/>
</dbReference>
<dbReference type="GO" id="GO:0005739">
    <property type="term" value="C:mitochondrion"/>
    <property type="evidence" value="ECO:0000318"/>
    <property type="project" value="GO_Central"/>
</dbReference>
<dbReference type="GO" id="GO:0019239">
    <property type="term" value="F:deaminase activity"/>
    <property type="evidence" value="ECO:0000318"/>
    <property type="project" value="GO_Central"/>
</dbReference>
<dbReference type="GO" id="GO:0044183">
    <property type="term" value="F:protein folding chaperone"/>
    <property type="evidence" value="ECO:0000314"/>
    <property type="project" value="FlyBase"/>
</dbReference>
<dbReference type="GO" id="GO:0006402">
    <property type="term" value="P:mRNA catabolic process"/>
    <property type="evidence" value="ECO:0000318"/>
    <property type="project" value="GO_Central"/>
</dbReference>
<dbReference type="GO" id="GO:0017148">
    <property type="term" value="P:negative regulation of translation"/>
    <property type="evidence" value="ECO:0000318"/>
    <property type="project" value="GO_Central"/>
</dbReference>
<dbReference type="GO" id="GO:0006457">
    <property type="term" value="P:protein folding"/>
    <property type="evidence" value="ECO:0000314"/>
    <property type="project" value="FlyBase"/>
</dbReference>
<dbReference type="CDD" id="cd00448">
    <property type="entry name" value="YjgF_YER057c_UK114_family"/>
    <property type="match status" value="1"/>
</dbReference>
<dbReference type="FunFam" id="3.30.1330.40:FF:000001">
    <property type="entry name" value="L-PSP family endoribonuclease"/>
    <property type="match status" value="1"/>
</dbReference>
<dbReference type="Gene3D" id="3.30.1330.40">
    <property type="entry name" value="RutC-like"/>
    <property type="match status" value="1"/>
</dbReference>
<dbReference type="InterPro" id="IPR006056">
    <property type="entry name" value="RidA"/>
</dbReference>
<dbReference type="InterPro" id="IPR019897">
    <property type="entry name" value="RidA_CS"/>
</dbReference>
<dbReference type="InterPro" id="IPR035959">
    <property type="entry name" value="RutC-like_sf"/>
</dbReference>
<dbReference type="InterPro" id="IPR006175">
    <property type="entry name" value="YjgF/YER057c/UK114"/>
</dbReference>
<dbReference type="NCBIfam" id="TIGR00004">
    <property type="entry name" value="Rid family detoxifying hydrolase"/>
    <property type="match status" value="1"/>
</dbReference>
<dbReference type="PANTHER" id="PTHR11803">
    <property type="entry name" value="2-IMINOBUTANOATE/2-IMINOPROPANOATE DEAMINASE RIDA"/>
    <property type="match status" value="1"/>
</dbReference>
<dbReference type="PANTHER" id="PTHR11803:SF39">
    <property type="entry name" value="2-IMINOBUTANOATE_2-IMINOPROPANOATE DEAMINASE"/>
    <property type="match status" value="1"/>
</dbReference>
<dbReference type="Pfam" id="PF01042">
    <property type="entry name" value="Ribonuc_L-PSP"/>
    <property type="match status" value="1"/>
</dbReference>
<dbReference type="SUPFAM" id="SSF55298">
    <property type="entry name" value="YjgF-like"/>
    <property type="match status" value="1"/>
</dbReference>
<dbReference type="PROSITE" id="PS01094">
    <property type="entry name" value="UPF0076"/>
    <property type="match status" value="1"/>
</dbReference>
<proteinExistence type="evidence at transcript level"/>
<gene>
    <name evidence="5" type="primary">UK114</name>
    <name evidence="5" type="ORF">CG15261</name>
</gene>
<keyword id="KW-0143">Chaperone</keyword>
<keyword id="KW-1185">Reference proteome</keyword>
<protein>
    <recommendedName>
        <fullName evidence="2">RutC family protein UK114</fullName>
    </recommendedName>
</protein>
<name>UK114_DROME</name>
<organism evidence="6">
    <name type="scientific">Drosophila melanogaster</name>
    <name type="common">Fruit fly</name>
    <dbReference type="NCBI Taxonomy" id="7227"/>
    <lineage>
        <taxon>Eukaryota</taxon>
        <taxon>Metazoa</taxon>
        <taxon>Ecdysozoa</taxon>
        <taxon>Arthropoda</taxon>
        <taxon>Hexapoda</taxon>
        <taxon>Insecta</taxon>
        <taxon>Pterygota</taxon>
        <taxon>Neoptera</taxon>
        <taxon>Endopterygota</taxon>
        <taxon>Diptera</taxon>
        <taxon>Brachycera</taxon>
        <taxon>Muscomorpha</taxon>
        <taxon>Ephydroidea</taxon>
        <taxon>Drosophilidae</taxon>
        <taxon>Drosophila</taxon>
        <taxon>Sophophora</taxon>
    </lineage>
</organism>
<sequence>MSTIVRKLISTANAAKPVAPYNQAVVADRTVYVSGCLGLDKDTMKLVPGGPTEQAQKALENLEAVLKAADSGVDKVIKNTVFLKDLNDFGAVNEVYKRVFNKDFPARSCFQVAKLPMDALVEIECIALTGSVETKTVQ</sequence>
<comment type="function">
    <text evidence="1">Molecular chaperone. Seems to fulfill an ATP-independent, HSP70-like function in protein folding. May protect essential factors of cell proliferation during heat shock. No role in calpain activation.</text>
</comment>
<comment type="similarity">
    <text evidence="2">Belongs to the RutC family.</text>
</comment>
<evidence type="ECO:0000269" key="1">
    <source>
    </source>
</evidence>
<evidence type="ECO:0000305" key="2"/>
<evidence type="ECO:0000312" key="3">
    <source>
        <dbReference type="EMBL" id="AAM50212.1"/>
    </source>
</evidence>
<evidence type="ECO:0000312" key="4">
    <source>
        <dbReference type="EMBL" id="ANY27883.1"/>
    </source>
</evidence>
<evidence type="ECO:0000312" key="5">
    <source>
        <dbReference type="FlyBase" id="FBgn0086691"/>
    </source>
</evidence>
<evidence type="ECO:0000312" key="6">
    <source>
        <dbReference type="Proteomes" id="UP000000803"/>
    </source>
</evidence>
<feature type="chain" id="PRO_0000438174" description="RutC family protein UK114">
    <location>
        <begin position="1"/>
        <end position="138"/>
    </location>
</feature>
<accession>Q9V3W0</accession>
<reference evidence="6" key="1">
    <citation type="journal article" date="2000" name="Science">
        <title>The genome sequence of Drosophila melanogaster.</title>
        <authorList>
            <person name="Adams M.D."/>
            <person name="Celniker S.E."/>
            <person name="Holt R.A."/>
            <person name="Evans C.A."/>
            <person name="Gocayne J.D."/>
            <person name="Amanatides P.G."/>
            <person name="Scherer S.E."/>
            <person name="Li P.W."/>
            <person name="Hoskins R.A."/>
            <person name="Galle R.F."/>
            <person name="George R.A."/>
            <person name="Lewis S.E."/>
            <person name="Richards S."/>
            <person name="Ashburner M."/>
            <person name="Henderson S.N."/>
            <person name="Sutton G.G."/>
            <person name="Wortman J.R."/>
            <person name="Yandell M.D."/>
            <person name="Zhang Q."/>
            <person name="Chen L.X."/>
            <person name="Brandon R.C."/>
            <person name="Rogers Y.-H.C."/>
            <person name="Blazej R.G."/>
            <person name="Champe M."/>
            <person name="Pfeiffer B.D."/>
            <person name="Wan K.H."/>
            <person name="Doyle C."/>
            <person name="Baxter E.G."/>
            <person name="Helt G."/>
            <person name="Nelson C.R."/>
            <person name="Miklos G.L.G."/>
            <person name="Abril J.F."/>
            <person name="Agbayani A."/>
            <person name="An H.-J."/>
            <person name="Andrews-Pfannkoch C."/>
            <person name="Baldwin D."/>
            <person name="Ballew R.M."/>
            <person name="Basu A."/>
            <person name="Baxendale J."/>
            <person name="Bayraktaroglu L."/>
            <person name="Beasley E.M."/>
            <person name="Beeson K.Y."/>
            <person name="Benos P.V."/>
            <person name="Berman B.P."/>
            <person name="Bhandari D."/>
            <person name="Bolshakov S."/>
            <person name="Borkova D."/>
            <person name="Botchan M.R."/>
            <person name="Bouck J."/>
            <person name="Brokstein P."/>
            <person name="Brottier P."/>
            <person name="Burtis K.C."/>
            <person name="Busam D.A."/>
            <person name="Butler H."/>
            <person name="Cadieu E."/>
            <person name="Center A."/>
            <person name="Chandra I."/>
            <person name="Cherry J.M."/>
            <person name="Cawley S."/>
            <person name="Dahlke C."/>
            <person name="Davenport L.B."/>
            <person name="Davies P."/>
            <person name="de Pablos B."/>
            <person name="Delcher A."/>
            <person name="Deng Z."/>
            <person name="Mays A.D."/>
            <person name="Dew I."/>
            <person name="Dietz S.M."/>
            <person name="Dodson K."/>
            <person name="Doup L.E."/>
            <person name="Downes M."/>
            <person name="Dugan-Rocha S."/>
            <person name="Dunkov B.C."/>
            <person name="Dunn P."/>
            <person name="Durbin K.J."/>
            <person name="Evangelista C.C."/>
            <person name="Ferraz C."/>
            <person name="Ferriera S."/>
            <person name="Fleischmann W."/>
            <person name="Fosler C."/>
            <person name="Gabrielian A.E."/>
            <person name="Garg N.S."/>
            <person name="Gelbart W.M."/>
            <person name="Glasser K."/>
            <person name="Glodek A."/>
            <person name="Gong F."/>
            <person name="Gorrell J.H."/>
            <person name="Gu Z."/>
            <person name="Guan P."/>
            <person name="Harris M."/>
            <person name="Harris N.L."/>
            <person name="Harvey D.A."/>
            <person name="Heiman T.J."/>
            <person name="Hernandez J.R."/>
            <person name="Houck J."/>
            <person name="Hostin D."/>
            <person name="Houston K.A."/>
            <person name="Howland T.J."/>
            <person name="Wei M.-H."/>
            <person name="Ibegwam C."/>
            <person name="Jalali M."/>
            <person name="Kalush F."/>
            <person name="Karpen G.H."/>
            <person name="Ke Z."/>
            <person name="Kennison J.A."/>
            <person name="Ketchum K.A."/>
            <person name="Kimmel B.E."/>
            <person name="Kodira C.D."/>
            <person name="Kraft C.L."/>
            <person name="Kravitz S."/>
            <person name="Kulp D."/>
            <person name="Lai Z."/>
            <person name="Lasko P."/>
            <person name="Lei Y."/>
            <person name="Levitsky A.A."/>
            <person name="Li J.H."/>
            <person name="Li Z."/>
            <person name="Liang Y."/>
            <person name="Lin X."/>
            <person name="Liu X."/>
            <person name="Mattei B."/>
            <person name="McIntosh T.C."/>
            <person name="McLeod M.P."/>
            <person name="McPherson D."/>
            <person name="Merkulov G."/>
            <person name="Milshina N.V."/>
            <person name="Mobarry C."/>
            <person name="Morris J."/>
            <person name="Moshrefi A."/>
            <person name="Mount S.M."/>
            <person name="Moy M."/>
            <person name="Murphy B."/>
            <person name="Murphy L."/>
            <person name="Muzny D.M."/>
            <person name="Nelson D.L."/>
            <person name="Nelson D.R."/>
            <person name="Nelson K.A."/>
            <person name="Nixon K."/>
            <person name="Nusskern D.R."/>
            <person name="Pacleb J.M."/>
            <person name="Palazzolo M."/>
            <person name="Pittman G.S."/>
            <person name="Pan S."/>
            <person name="Pollard J."/>
            <person name="Puri V."/>
            <person name="Reese M.G."/>
            <person name="Reinert K."/>
            <person name="Remington K."/>
            <person name="Saunders R.D.C."/>
            <person name="Scheeler F."/>
            <person name="Shen H."/>
            <person name="Shue B.C."/>
            <person name="Siden-Kiamos I."/>
            <person name="Simpson M."/>
            <person name="Skupski M.P."/>
            <person name="Smith T.J."/>
            <person name="Spier E."/>
            <person name="Spradling A.C."/>
            <person name="Stapleton M."/>
            <person name="Strong R."/>
            <person name="Sun E."/>
            <person name="Svirskas R."/>
            <person name="Tector C."/>
            <person name="Turner R."/>
            <person name="Venter E."/>
            <person name="Wang A.H."/>
            <person name="Wang X."/>
            <person name="Wang Z.-Y."/>
            <person name="Wassarman D.A."/>
            <person name="Weinstock G.M."/>
            <person name="Weissenbach J."/>
            <person name="Williams S.M."/>
            <person name="Woodage T."/>
            <person name="Worley K.C."/>
            <person name="Wu D."/>
            <person name="Yang S."/>
            <person name="Yao Q.A."/>
            <person name="Ye J."/>
            <person name="Yeh R.-F."/>
            <person name="Zaveri J.S."/>
            <person name="Zhan M."/>
            <person name="Zhang G."/>
            <person name="Zhao Q."/>
            <person name="Zheng L."/>
            <person name="Zheng X.H."/>
            <person name="Zhong F.N."/>
            <person name="Zhong W."/>
            <person name="Zhou X."/>
            <person name="Zhu S.C."/>
            <person name="Zhu X."/>
            <person name="Smith H.O."/>
            <person name="Gibbs R.A."/>
            <person name="Myers E.W."/>
            <person name="Rubin G.M."/>
            <person name="Venter J.C."/>
        </authorList>
    </citation>
    <scope>NUCLEOTIDE SEQUENCE [LARGE SCALE GENOMIC DNA]</scope>
    <source>
        <strain evidence="6">Berkeley</strain>
    </source>
</reference>
<reference evidence="6" key="2">
    <citation type="journal article" date="2002" name="Genome Biol.">
        <title>Annotation of the Drosophila melanogaster euchromatic genome: a systematic review.</title>
        <authorList>
            <person name="Misra S."/>
            <person name="Crosby M.A."/>
            <person name="Mungall C.J."/>
            <person name="Matthews B.B."/>
            <person name="Campbell K.S."/>
            <person name="Hradecky P."/>
            <person name="Huang Y."/>
            <person name="Kaminker J.S."/>
            <person name="Millburn G.H."/>
            <person name="Prochnik S.E."/>
            <person name="Smith C.D."/>
            <person name="Tupy J.L."/>
            <person name="Whitfield E.J."/>
            <person name="Bayraktaroglu L."/>
            <person name="Berman B.P."/>
            <person name="Bettencourt B.R."/>
            <person name="Celniker S.E."/>
            <person name="de Grey A.D.N.J."/>
            <person name="Drysdale R.A."/>
            <person name="Harris N.L."/>
            <person name="Richter J."/>
            <person name="Russo S."/>
            <person name="Schroeder A.J."/>
            <person name="Shu S.Q."/>
            <person name="Stapleton M."/>
            <person name="Yamada C."/>
            <person name="Ashburner M."/>
            <person name="Gelbart W.M."/>
            <person name="Rubin G.M."/>
            <person name="Lewis S.E."/>
        </authorList>
    </citation>
    <scope>GENOME REANNOTATION</scope>
    <source>
        <strain evidence="6">Berkeley</strain>
    </source>
</reference>
<reference evidence="3" key="3">
    <citation type="submission" date="2003-12" db="EMBL/GenBank/DDBJ databases">
        <authorList>
            <person name="Stapleton M."/>
            <person name="Brokstein P."/>
            <person name="Hong L."/>
            <person name="Agbayani A."/>
            <person name="Carlson J."/>
            <person name="Champe M."/>
            <person name="Chavez C."/>
            <person name="Dorsett V."/>
            <person name="Dresnek D."/>
            <person name="Farfan D."/>
            <person name="Frise E."/>
            <person name="George R."/>
            <person name="Gonzalez M."/>
            <person name="Guarin H."/>
            <person name="Kronmiller B."/>
            <person name="Li P."/>
            <person name="Liao G."/>
            <person name="Miranda A."/>
            <person name="Mungall C.J."/>
            <person name="Nunoo J."/>
            <person name="Pacleb J."/>
            <person name="Paragas V."/>
            <person name="Park S."/>
            <person name="Patel S."/>
            <person name="Phouanenavong S."/>
            <person name="Wan K."/>
            <person name="Yu C."/>
            <person name="Lewis S.E."/>
            <person name="Rubin G.M."/>
            <person name="Celniker S."/>
        </authorList>
    </citation>
    <scope>NUCLEOTIDE SEQUENCE [LARGE SCALE MRNA]</scope>
    <source>
        <strain evidence="3">Berkeley</strain>
        <tissue evidence="3">Ovary</tissue>
    </source>
</reference>
<reference key="4">
    <citation type="submission" date="2016-08" db="EMBL/GenBank/DDBJ databases">
        <authorList>
            <person name="Wan K."/>
            <person name="Booth B."/>
            <person name="Spirohn K."/>
            <person name="Hao T."/>
            <person name="Hu Y."/>
            <person name="Calderwood M."/>
            <person name="Hill D."/>
            <person name="Mohr S."/>
            <person name="Vidal M."/>
            <person name="Celniker S."/>
            <person name="Perrimon N."/>
        </authorList>
    </citation>
    <scope>NUCLEOTIDE SEQUENCE [LARGE SCALE MRNA]</scope>
    <source>
        <strain evidence="4">Berkeley</strain>
        <tissue evidence="4">Ovary</tissue>
    </source>
</reference>
<reference key="5">
    <citation type="journal article" date="2004" name="Biochem. J.">
        <title>DUK114, the Drosophila orthologue of bovine brain calpain activator protein, is a molecular chaperone.</title>
        <authorList>
            <person name="Farkas A."/>
            <person name="Nardai G."/>
            <person name="Csermely P."/>
            <person name="Tompa P."/>
            <person name="Friedrich P."/>
        </authorList>
    </citation>
    <scope>FUNCTION</scope>
</reference>